<evidence type="ECO:0000250" key="1"/>
<evidence type="ECO:0000269" key="2">
    <source>
    </source>
</evidence>
<feature type="peptide" id="PRO_0000285258" description="M-lycotoxin-Ls2a">
    <location>
        <begin position="1"/>
        <end position="26"/>
    </location>
</feature>
<dbReference type="ArachnoServer" id="AS000064">
    <property type="toxin name" value="M-lycotoxin-Ls2a"/>
</dbReference>
<dbReference type="GO" id="GO:0005576">
    <property type="term" value="C:extracellular region"/>
    <property type="evidence" value="ECO:0007669"/>
    <property type="project" value="UniProtKB-SubCell"/>
</dbReference>
<dbReference type="GO" id="GO:0016020">
    <property type="term" value="C:membrane"/>
    <property type="evidence" value="ECO:0007669"/>
    <property type="project" value="UniProtKB-KW"/>
</dbReference>
<dbReference type="GO" id="GO:0044218">
    <property type="term" value="C:other organism cell membrane"/>
    <property type="evidence" value="ECO:0007669"/>
    <property type="project" value="UniProtKB-KW"/>
</dbReference>
<dbReference type="GO" id="GO:0090729">
    <property type="term" value="F:toxin activity"/>
    <property type="evidence" value="ECO:0007669"/>
    <property type="project" value="UniProtKB-KW"/>
</dbReference>
<dbReference type="GO" id="GO:0042742">
    <property type="term" value="P:defense response to bacterium"/>
    <property type="evidence" value="ECO:0007669"/>
    <property type="project" value="UniProtKB-KW"/>
</dbReference>
<dbReference type="GO" id="GO:0031640">
    <property type="term" value="P:killing of cells of another organism"/>
    <property type="evidence" value="ECO:0007669"/>
    <property type="project" value="UniProtKB-KW"/>
</dbReference>
<dbReference type="GO" id="GO:0006811">
    <property type="term" value="P:monoatomic ion transport"/>
    <property type="evidence" value="ECO:0007669"/>
    <property type="project" value="UniProtKB-KW"/>
</dbReference>
<keyword id="KW-0044">Antibiotic</keyword>
<keyword id="KW-0929">Antimicrobial</keyword>
<keyword id="KW-0204">Cytolysis</keyword>
<keyword id="KW-0903">Direct protein sequencing</keyword>
<keyword id="KW-0354">Hemolysis</keyword>
<keyword id="KW-0406">Ion transport</keyword>
<keyword id="KW-0472">Membrane</keyword>
<keyword id="KW-0528">Neurotoxin</keyword>
<keyword id="KW-0964">Secreted</keyword>
<keyword id="KW-1052">Target cell membrane</keyword>
<keyword id="KW-1053">Target membrane</keyword>
<keyword id="KW-0800">Toxin</keyword>
<keyword id="KW-0812">Transmembrane</keyword>
<keyword id="KW-0813">Transport</keyword>
<accession>P0C2U8</accession>
<comment type="function">
    <text evidence="1">Forms pore that permeabilize the cell membrane. Promotes efflux of calcium from synaptosomes, causes hemolysis, and dissipates voltage gradients across muscle membrane. Potently inhibits the growth of bacteria and yeast. May function both in the prey capture strategy as well as protection from infectious organisms arising from prey ingestion (By similarity).</text>
</comment>
<comment type="subcellular location">
    <subcellularLocation>
        <location>Secreted</location>
    </subcellularLocation>
    <subcellularLocation>
        <location evidence="1">Target cell membrane</location>
    </subcellularLocation>
    <text evidence="1">Forms a membrane channel in the prey.</text>
</comment>
<comment type="tissue specificity">
    <text>Expressed by the venom gland.</text>
</comment>
<comment type="mass spectrometry"/>
<comment type="similarity">
    <text>Belongs to the cationic peptide 04 (cupiennin) family. 05 subfamily.</text>
</comment>
<name>LYC3_LYCSI</name>
<proteinExistence type="evidence at protein level"/>
<reference key="1">
    <citation type="journal article" date="2004" name="J. Mass Spectrom.">
        <title>De novo sequencing of antimicrobial peptides isolated from the venom glands of the wolf spider Lycosa singoriensis.</title>
        <authorList>
            <person name="Budnik B.A."/>
            <person name="Olsen J.V."/>
            <person name="Egorov T.A."/>
            <person name="Anisimova V.E."/>
            <person name="Galkina T.G."/>
            <person name="Musolyamov A.K."/>
            <person name="Grishin E.V."/>
            <person name="Zubarev R.A."/>
        </authorList>
    </citation>
    <scope>PROTEIN SEQUENCE</scope>
    <scope>MASS SPECTROMETRY</scope>
    <source>
        <tissue>Venom</tissue>
    </source>
</reference>
<sequence>KIKWFKTMKSLAKFLAKEQMKKHLGE</sequence>
<protein>
    <recommendedName>
        <fullName>M-lycotoxin-Ls2a</fullName>
        <shortName>M-LCTX-Ls2a</shortName>
    </recommendedName>
    <alternativeName>
        <fullName>Lycocitin-3</fullName>
    </alternativeName>
</protein>
<organism>
    <name type="scientific">Lycosa singoriensis</name>
    <name type="common">Wolf spider</name>
    <name type="synonym">Aranea singoriensis</name>
    <dbReference type="NCBI Taxonomy" id="434756"/>
    <lineage>
        <taxon>Eukaryota</taxon>
        <taxon>Metazoa</taxon>
        <taxon>Ecdysozoa</taxon>
        <taxon>Arthropoda</taxon>
        <taxon>Chelicerata</taxon>
        <taxon>Arachnida</taxon>
        <taxon>Araneae</taxon>
        <taxon>Araneomorphae</taxon>
        <taxon>Entelegynae</taxon>
        <taxon>Lycosoidea</taxon>
        <taxon>Lycosidae</taxon>
        <taxon>Lycosa</taxon>
    </lineage>
</organism>